<proteinExistence type="inferred from homology"/>
<gene>
    <name evidence="1" type="primary">rpmC</name>
    <name type="ordered locus">CAB100.1</name>
</gene>
<accession>Q5L712</accession>
<reference key="1">
    <citation type="journal article" date="2005" name="Genome Res.">
        <title>The Chlamydophila abortus genome sequence reveals an array of variable proteins that contribute to interspecies variation.</title>
        <authorList>
            <person name="Thomson N.R."/>
            <person name="Yeats C."/>
            <person name="Bell K."/>
            <person name="Holden M.T.G."/>
            <person name="Bentley S.D."/>
            <person name="Livingstone M."/>
            <person name="Cerdeno-Tarraga A.-M."/>
            <person name="Harris B."/>
            <person name="Doggett J."/>
            <person name="Ormond D."/>
            <person name="Mungall K."/>
            <person name="Clarke K."/>
            <person name="Feltwell T."/>
            <person name="Hance Z."/>
            <person name="Sanders M."/>
            <person name="Quail M.A."/>
            <person name="Price C."/>
            <person name="Barrell B.G."/>
            <person name="Parkhill J."/>
            <person name="Longbottom D."/>
        </authorList>
    </citation>
    <scope>NUCLEOTIDE SEQUENCE [LARGE SCALE GENOMIC DNA]</scope>
    <source>
        <strain>DSM 27085 / S26/3</strain>
    </source>
</reference>
<name>RL29_CHLAB</name>
<evidence type="ECO:0000255" key="1">
    <source>
        <dbReference type="HAMAP-Rule" id="MF_00374"/>
    </source>
</evidence>
<evidence type="ECO:0000305" key="2"/>
<dbReference type="EMBL" id="CR848038">
    <property type="protein sequence ID" value="CAH63558.1"/>
    <property type="molecule type" value="Genomic_DNA"/>
</dbReference>
<dbReference type="RefSeq" id="WP_006343771.1">
    <property type="nucleotide sequence ID" value="NC_004552.2"/>
</dbReference>
<dbReference type="SMR" id="Q5L712"/>
<dbReference type="GeneID" id="93024647"/>
<dbReference type="KEGG" id="cab:CAB100A"/>
<dbReference type="eggNOG" id="COG0255">
    <property type="taxonomic scope" value="Bacteria"/>
</dbReference>
<dbReference type="HOGENOM" id="CLU_2715043_0_0_0"/>
<dbReference type="OrthoDB" id="18593at2"/>
<dbReference type="Proteomes" id="UP000001012">
    <property type="component" value="Chromosome"/>
</dbReference>
<dbReference type="GO" id="GO:1990904">
    <property type="term" value="C:ribonucleoprotein complex"/>
    <property type="evidence" value="ECO:0007669"/>
    <property type="project" value="UniProtKB-KW"/>
</dbReference>
<dbReference type="GO" id="GO:0005840">
    <property type="term" value="C:ribosome"/>
    <property type="evidence" value="ECO:0007669"/>
    <property type="project" value="UniProtKB-KW"/>
</dbReference>
<dbReference type="GO" id="GO:0003735">
    <property type="term" value="F:structural constituent of ribosome"/>
    <property type="evidence" value="ECO:0007669"/>
    <property type="project" value="InterPro"/>
</dbReference>
<dbReference type="GO" id="GO:0006412">
    <property type="term" value="P:translation"/>
    <property type="evidence" value="ECO:0007669"/>
    <property type="project" value="UniProtKB-UniRule"/>
</dbReference>
<dbReference type="Gene3D" id="1.10.287.310">
    <property type="match status" value="1"/>
</dbReference>
<dbReference type="HAMAP" id="MF_00374">
    <property type="entry name" value="Ribosomal_uL29"/>
    <property type="match status" value="1"/>
</dbReference>
<dbReference type="InterPro" id="IPR001854">
    <property type="entry name" value="Ribosomal_uL29"/>
</dbReference>
<dbReference type="InterPro" id="IPR036049">
    <property type="entry name" value="Ribosomal_uL29_sf"/>
</dbReference>
<dbReference type="NCBIfam" id="TIGR00012">
    <property type="entry name" value="L29"/>
    <property type="match status" value="1"/>
</dbReference>
<dbReference type="Pfam" id="PF00831">
    <property type="entry name" value="Ribosomal_L29"/>
    <property type="match status" value="1"/>
</dbReference>
<dbReference type="SUPFAM" id="SSF46561">
    <property type="entry name" value="Ribosomal protein L29 (L29p)"/>
    <property type="match status" value="1"/>
</dbReference>
<sequence>MSVKKKLLAELRQKSLVELDAFIHENKKALFSLRAEAALQNKAVKTHLFSMYKKTIARSMTVKQEKEGKVDG</sequence>
<protein>
    <recommendedName>
        <fullName evidence="1">Large ribosomal subunit protein uL29</fullName>
    </recommendedName>
    <alternativeName>
        <fullName evidence="2">50S ribosomal protein L29</fullName>
    </alternativeName>
</protein>
<comment type="similarity">
    <text evidence="1">Belongs to the universal ribosomal protein uL29 family.</text>
</comment>
<keyword id="KW-0687">Ribonucleoprotein</keyword>
<keyword id="KW-0689">Ribosomal protein</keyword>
<organism>
    <name type="scientific">Chlamydia abortus (strain DSM 27085 / S26/3)</name>
    <name type="common">Chlamydophila abortus</name>
    <dbReference type="NCBI Taxonomy" id="218497"/>
    <lineage>
        <taxon>Bacteria</taxon>
        <taxon>Pseudomonadati</taxon>
        <taxon>Chlamydiota</taxon>
        <taxon>Chlamydiia</taxon>
        <taxon>Chlamydiales</taxon>
        <taxon>Chlamydiaceae</taxon>
        <taxon>Chlamydia/Chlamydophila group</taxon>
        <taxon>Chlamydia</taxon>
    </lineage>
</organism>
<feature type="chain" id="PRO_0000130370" description="Large ribosomal subunit protein uL29">
    <location>
        <begin position="1"/>
        <end position="72"/>
    </location>
</feature>